<protein>
    <recommendedName>
        <fullName evidence="1">DNA-directed RNA polymerase subunit alpha</fullName>
        <shortName evidence="1">RNAP subunit alpha</shortName>
        <ecNumber evidence="1">2.7.7.6</ecNumber>
    </recommendedName>
    <alternativeName>
        <fullName evidence="1">RNA polymerase subunit alpha</fullName>
    </alternativeName>
    <alternativeName>
        <fullName evidence="1">Transcriptase subunit alpha</fullName>
    </alternativeName>
</protein>
<accession>P56001</accession>
<feature type="chain" id="PRO_0000175316" description="DNA-directed RNA polymerase subunit alpha">
    <location>
        <begin position="1"/>
        <end position="344"/>
    </location>
</feature>
<feature type="region of interest" description="Alpha N-terminal domain (alpha-NTD)" evidence="1">
    <location>
        <begin position="1"/>
        <end position="238"/>
    </location>
</feature>
<feature type="region of interest" description="Alpha C-terminal domain (alpha-CTD)" evidence="1">
    <location>
        <begin position="254"/>
        <end position="344"/>
    </location>
</feature>
<proteinExistence type="inferred from homology"/>
<keyword id="KW-0240">DNA-directed RNA polymerase</keyword>
<keyword id="KW-0548">Nucleotidyltransferase</keyword>
<keyword id="KW-1185">Reference proteome</keyword>
<keyword id="KW-0804">Transcription</keyword>
<keyword id="KW-0808">Transferase</keyword>
<sequence length="344" mass="38499">MKVIKTAPLIPSEIKVLEKEGNRVKISLAPFEFGYAVTLAHPIRRLLLLSSVGYAPVGLKIEGVHHEFDSLRGVTEDVSLFIMNLKNIRFIAKALVGQDSSLENQSVVVDYSFKGPMELRARDLNSEQIEIVNPEMPLATINEDAQLNFSLIIYKGMGYVPSENTRELMPEGYMPLDGSFTPIKKVVYEIENVLVEGDPNYEKIIFDIETDGQIDPYKAFLSAVKVMSKQLGVFGERPIANTEYSGDYAQRDDAKDLSAKIESMNLSARCFNCLDKIGIKYVGELVLMSEEELKGVKNMGKKSYDEIAEKLNDLGYPVGTELSPEQRESLKKRLEKLEDKGGND</sequence>
<comment type="function">
    <text evidence="1">DNA-dependent RNA polymerase catalyzes the transcription of DNA into RNA using the four ribonucleoside triphosphates as substrates.</text>
</comment>
<comment type="catalytic activity">
    <reaction evidence="1">
        <text>RNA(n) + a ribonucleoside 5'-triphosphate = RNA(n+1) + diphosphate</text>
        <dbReference type="Rhea" id="RHEA:21248"/>
        <dbReference type="Rhea" id="RHEA-COMP:14527"/>
        <dbReference type="Rhea" id="RHEA-COMP:17342"/>
        <dbReference type="ChEBI" id="CHEBI:33019"/>
        <dbReference type="ChEBI" id="CHEBI:61557"/>
        <dbReference type="ChEBI" id="CHEBI:140395"/>
        <dbReference type="EC" id="2.7.7.6"/>
    </reaction>
</comment>
<comment type="subunit">
    <text evidence="1">Homodimer. The RNAP catalytic core consists of 2 alpha, 1 beta, 1 beta' and 1 omega subunit. When a sigma factor is associated with the core the holoenzyme is formed, which can initiate transcription.</text>
</comment>
<comment type="domain">
    <text evidence="1">The N-terminal domain is essential for RNAP assembly and basal transcription, whereas the C-terminal domain is involved in interaction with transcriptional regulators and with upstream promoter elements.</text>
</comment>
<comment type="similarity">
    <text evidence="1">Belongs to the RNA polymerase alpha chain family.</text>
</comment>
<evidence type="ECO:0000255" key="1">
    <source>
        <dbReference type="HAMAP-Rule" id="MF_00059"/>
    </source>
</evidence>
<organism>
    <name type="scientific">Helicobacter pylori (strain ATCC 700392 / 26695)</name>
    <name type="common">Campylobacter pylori</name>
    <dbReference type="NCBI Taxonomy" id="85962"/>
    <lineage>
        <taxon>Bacteria</taxon>
        <taxon>Pseudomonadati</taxon>
        <taxon>Campylobacterota</taxon>
        <taxon>Epsilonproteobacteria</taxon>
        <taxon>Campylobacterales</taxon>
        <taxon>Helicobacteraceae</taxon>
        <taxon>Helicobacter</taxon>
    </lineage>
</organism>
<dbReference type="EC" id="2.7.7.6" evidence="1"/>
<dbReference type="EMBL" id="AE000511">
    <property type="protein sequence ID" value="AAD08336.1"/>
    <property type="molecule type" value="Genomic_DNA"/>
</dbReference>
<dbReference type="PIR" id="E64681">
    <property type="entry name" value="E64681"/>
</dbReference>
<dbReference type="RefSeq" id="NP_208085.1">
    <property type="nucleotide sequence ID" value="NC_000915.1"/>
</dbReference>
<dbReference type="RefSeq" id="WP_000864547.1">
    <property type="nucleotide sequence ID" value="NC_018939.1"/>
</dbReference>
<dbReference type="BMRB" id="P56001"/>
<dbReference type="SMR" id="P56001"/>
<dbReference type="DIP" id="DIP-3396N"/>
<dbReference type="FunCoup" id="P56001">
    <property type="interactions" value="354"/>
</dbReference>
<dbReference type="IntAct" id="P56001">
    <property type="interactions" value="2"/>
</dbReference>
<dbReference type="MINT" id="P56001"/>
<dbReference type="STRING" id="85962.HP_1293"/>
<dbReference type="PaxDb" id="85962-C694_06680"/>
<dbReference type="EnsemblBacteria" id="AAD08336">
    <property type="protein sequence ID" value="AAD08336"/>
    <property type="gene ID" value="HP_1293"/>
</dbReference>
<dbReference type="KEGG" id="heo:C694_06680"/>
<dbReference type="KEGG" id="hpy:HP_1293"/>
<dbReference type="PATRIC" id="fig|85962.47.peg.1387"/>
<dbReference type="eggNOG" id="COG0202">
    <property type="taxonomic scope" value="Bacteria"/>
</dbReference>
<dbReference type="InParanoid" id="P56001"/>
<dbReference type="OrthoDB" id="9805706at2"/>
<dbReference type="PhylomeDB" id="P56001"/>
<dbReference type="Proteomes" id="UP000000429">
    <property type="component" value="Chromosome"/>
</dbReference>
<dbReference type="GO" id="GO:0005737">
    <property type="term" value="C:cytoplasm"/>
    <property type="evidence" value="ECO:0000318"/>
    <property type="project" value="GO_Central"/>
</dbReference>
<dbReference type="GO" id="GO:0000428">
    <property type="term" value="C:DNA-directed RNA polymerase complex"/>
    <property type="evidence" value="ECO:0007669"/>
    <property type="project" value="UniProtKB-KW"/>
</dbReference>
<dbReference type="GO" id="GO:0003677">
    <property type="term" value="F:DNA binding"/>
    <property type="evidence" value="ECO:0007669"/>
    <property type="project" value="UniProtKB-UniRule"/>
</dbReference>
<dbReference type="GO" id="GO:0003899">
    <property type="term" value="F:DNA-directed RNA polymerase activity"/>
    <property type="evidence" value="ECO:0007669"/>
    <property type="project" value="UniProtKB-UniRule"/>
</dbReference>
<dbReference type="GO" id="GO:0046983">
    <property type="term" value="F:protein dimerization activity"/>
    <property type="evidence" value="ECO:0007669"/>
    <property type="project" value="InterPro"/>
</dbReference>
<dbReference type="GO" id="GO:0006351">
    <property type="term" value="P:DNA-templated transcription"/>
    <property type="evidence" value="ECO:0007669"/>
    <property type="project" value="UniProtKB-UniRule"/>
</dbReference>
<dbReference type="CDD" id="cd06928">
    <property type="entry name" value="RNAP_alpha_NTD"/>
    <property type="match status" value="1"/>
</dbReference>
<dbReference type="FunFam" id="1.10.150.20:FF:000122">
    <property type="entry name" value="DNA-directed RNA polymerase subunit alpha"/>
    <property type="match status" value="1"/>
</dbReference>
<dbReference type="FunFam" id="2.170.120.12:FF:000015">
    <property type="entry name" value="DNA-directed RNA polymerase subunit alpha"/>
    <property type="match status" value="1"/>
</dbReference>
<dbReference type="Gene3D" id="1.10.150.20">
    <property type="entry name" value="5' to 3' exonuclease, C-terminal subdomain"/>
    <property type="match status" value="1"/>
</dbReference>
<dbReference type="Gene3D" id="2.170.120.12">
    <property type="entry name" value="DNA-directed RNA polymerase, insert domain"/>
    <property type="match status" value="1"/>
</dbReference>
<dbReference type="Gene3D" id="3.30.1360.10">
    <property type="entry name" value="RNA polymerase, RBP11-like subunit"/>
    <property type="match status" value="1"/>
</dbReference>
<dbReference type="HAMAP" id="MF_00059">
    <property type="entry name" value="RNApol_bact_RpoA"/>
    <property type="match status" value="1"/>
</dbReference>
<dbReference type="InterPro" id="IPR011262">
    <property type="entry name" value="DNA-dir_RNA_pol_insert"/>
</dbReference>
<dbReference type="InterPro" id="IPR011263">
    <property type="entry name" value="DNA-dir_RNA_pol_RpoA/D/Rpb3"/>
</dbReference>
<dbReference type="InterPro" id="IPR011773">
    <property type="entry name" value="DNA-dir_RpoA"/>
</dbReference>
<dbReference type="InterPro" id="IPR036603">
    <property type="entry name" value="RBP11-like"/>
</dbReference>
<dbReference type="InterPro" id="IPR011260">
    <property type="entry name" value="RNAP_asu_C"/>
</dbReference>
<dbReference type="InterPro" id="IPR036643">
    <property type="entry name" value="RNApol_insert_sf"/>
</dbReference>
<dbReference type="NCBIfam" id="NF003517">
    <property type="entry name" value="PRK05182.2-3"/>
    <property type="match status" value="1"/>
</dbReference>
<dbReference type="NCBIfam" id="TIGR02027">
    <property type="entry name" value="rpoA"/>
    <property type="match status" value="1"/>
</dbReference>
<dbReference type="Pfam" id="PF01000">
    <property type="entry name" value="RNA_pol_A_bac"/>
    <property type="match status" value="1"/>
</dbReference>
<dbReference type="Pfam" id="PF03118">
    <property type="entry name" value="RNA_pol_A_CTD"/>
    <property type="match status" value="1"/>
</dbReference>
<dbReference type="Pfam" id="PF01193">
    <property type="entry name" value="RNA_pol_L"/>
    <property type="match status" value="1"/>
</dbReference>
<dbReference type="SMART" id="SM00662">
    <property type="entry name" value="RPOLD"/>
    <property type="match status" value="1"/>
</dbReference>
<dbReference type="SUPFAM" id="SSF47789">
    <property type="entry name" value="C-terminal domain of RNA polymerase alpha subunit"/>
    <property type="match status" value="1"/>
</dbReference>
<dbReference type="SUPFAM" id="SSF56553">
    <property type="entry name" value="Insert subdomain of RNA polymerase alpha subunit"/>
    <property type="match status" value="1"/>
</dbReference>
<dbReference type="SUPFAM" id="SSF55257">
    <property type="entry name" value="RBP11-like subunits of RNA polymerase"/>
    <property type="match status" value="1"/>
</dbReference>
<gene>
    <name evidence="1" type="primary">rpoA</name>
    <name type="ordered locus">HP_1293</name>
</gene>
<reference key="1">
    <citation type="journal article" date="1997" name="Nature">
        <title>The complete genome sequence of the gastric pathogen Helicobacter pylori.</title>
        <authorList>
            <person name="Tomb J.-F."/>
            <person name="White O."/>
            <person name="Kerlavage A.R."/>
            <person name="Clayton R.A."/>
            <person name="Sutton G.G."/>
            <person name="Fleischmann R.D."/>
            <person name="Ketchum K.A."/>
            <person name="Klenk H.-P."/>
            <person name="Gill S.R."/>
            <person name="Dougherty B.A."/>
            <person name="Nelson K.E."/>
            <person name="Quackenbush J."/>
            <person name="Zhou L."/>
            <person name="Kirkness E.F."/>
            <person name="Peterson S.N."/>
            <person name="Loftus B.J."/>
            <person name="Richardson D.L."/>
            <person name="Dodson R.J."/>
            <person name="Khalak H.G."/>
            <person name="Glodek A."/>
            <person name="McKenney K."/>
            <person name="FitzGerald L.M."/>
            <person name="Lee N."/>
            <person name="Adams M.D."/>
            <person name="Hickey E.K."/>
            <person name="Berg D.E."/>
            <person name="Gocayne J.D."/>
            <person name="Utterback T.R."/>
            <person name="Peterson J.D."/>
            <person name="Kelley J.M."/>
            <person name="Cotton M.D."/>
            <person name="Weidman J.F."/>
            <person name="Fujii C."/>
            <person name="Bowman C."/>
            <person name="Watthey L."/>
            <person name="Wallin E."/>
            <person name="Hayes W.S."/>
            <person name="Borodovsky M."/>
            <person name="Karp P.D."/>
            <person name="Smith H.O."/>
            <person name="Fraser C.M."/>
            <person name="Venter J.C."/>
        </authorList>
    </citation>
    <scope>NUCLEOTIDE SEQUENCE [LARGE SCALE GENOMIC DNA]</scope>
    <source>
        <strain>ATCC 700392 / 26695</strain>
    </source>
</reference>
<name>RPOA_HELPY</name>